<feature type="signal peptide" evidence="4">
    <location>
        <begin position="1"/>
        <end position="29"/>
    </location>
</feature>
<feature type="chain" id="PRO_0000011123" description="Golgi apparatus protein 1">
    <location>
        <begin position="30"/>
        <end position="1142"/>
    </location>
</feature>
<feature type="topological domain" description="Extracellular" evidence="4">
    <location>
        <begin position="30"/>
        <end position="1108"/>
    </location>
</feature>
<feature type="transmembrane region" description="Helical" evidence="4">
    <location>
        <begin position="1109"/>
        <end position="1129"/>
    </location>
</feature>
<feature type="topological domain" description="Cytoplasmic" evidence="4">
    <location>
        <begin position="1130"/>
        <end position="1142"/>
    </location>
</feature>
<feature type="repeat" description="Cys-rich GLG1 1">
    <location>
        <begin position="81"/>
        <end position="112"/>
    </location>
</feature>
<feature type="repeat" description="Cys-rich GLG1 2">
    <location>
        <begin position="113"/>
        <end position="175"/>
    </location>
</feature>
<feature type="repeat" description="Cys-rich GLG1 3">
    <location>
        <begin position="178"/>
        <end position="241"/>
    </location>
</feature>
<feature type="repeat" description="Cys-rich GLG1 4">
    <location>
        <begin position="249"/>
        <end position="309"/>
    </location>
</feature>
<feature type="repeat" description="Cys-rich GLG1 5">
    <location>
        <begin position="310"/>
        <end position="376"/>
    </location>
</feature>
<feature type="repeat" description="Cys-rich GLG1 6">
    <location>
        <begin position="377"/>
        <end position="436"/>
    </location>
</feature>
<feature type="repeat" description="Cys-rich GLG1 7">
    <location>
        <begin position="438"/>
        <end position="500"/>
    </location>
</feature>
<feature type="repeat" description="Cys-rich GLG1 8">
    <location>
        <begin position="501"/>
        <end position="567"/>
    </location>
</feature>
<feature type="repeat" description="Cys-rich GLG1 9">
    <location>
        <begin position="572"/>
        <end position="631"/>
    </location>
</feature>
<feature type="repeat" description="Cys-rich GLG1 10">
    <location>
        <begin position="633"/>
        <end position="691"/>
    </location>
</feature>
<feature type="repeat" description="Cys-rich GLG1 11">
    <location>
        <begin position="692"/>
        <end position="751"/>
    </location>
</feature>
<feature type="repeat" description="Cys-rich GLG1 12">
    <location>
        <begin position="759"/>
        <end position="819"/>
    </location>
</feature>
<feature type="repeat" description="Cys-rich GLG1 13">
    <location>
        <begin position="821"/>
        <end position="874"/>
    </location>
</feature>
<feature type="repeat" description="Cys-rich GLG1 14">
    <location>
        <begin position="875"/>
        <end position="942"/>
    </location>
</feature>
<feature type="repeat" description="Cys-rich GLG1 15">
    <location>
        <begin position="943"/>
        <end position="998"/>
    </location>
</feature>
<feature type="repeat" description="Cys-rich GLG1 16">
    <location>
        <begin position="1004"/>
        <end position="1064"/>
    </location>
</feature>
<feature type="region of interest" description="Disordered" evidence="5">
    <location>
        <begin position="45"/>
        <end position="69"/>
    </location>
</feature>
<feature type="compositionally biased region" description="Low complexity" evidence="5">
    <location>
        <begin position="45"/>
        <end position="60"/>
    </location>
</feature>
<feature type="glycosylation site" description="N-linked (GlcNAc...) asparagine" evidence="4">
    <location>
        <position position="128"/>
    </location>
</feature>
<feature type="glycosylation site" description="N-linked (GlcNAc...) asparagine" evidence="4">
    <location>
        <position position="173"/>
    </location>
</feature>
<feature type="glycosylation site" description="N-linked (GlcNAc...) asparagine" evidence="4">
    <location>
        <position position="544"/>
    </location>
</feature>
<feature type="glycosylation site" description="N-linked (GlcNAc...) asparagine" evidence="4">
    <location>
        <position position="640"/>
    </location>
</feature>
<feature type="glycosylation site" description="N-linked (GlcNAc...) asparagine" evidence="4">
    <location>
        <position position="749"/>
    </location>
</feature>
<feature type="mutagenesis site" description="In CHO.MUTCFR mutant; unable to regulate FGF levels and is detected throughout the cell." evidence="8">
    <original>CAAIPPGRGRQMSCLMEALEDKRVRLQPECKKRLNDRIEMWSYAAKVAPAEGFSDLAMQVMTSPSKNYILSVITVGICVLFLIGLMCGRITKRVTRELKDR</original>
    <variation>IVLKCGAMLQRLPQRKASLTLPCKLRPLRPRITYCL</variation>
    <location>
        <begin position="1042"/>
        <end position="1142"/>
    </location>
</feature>
<evidence type="ECO:0000250" key="1">
    <source>
        <dbReference type="UniProtKB" id="Q61543"/>
    </source>
</evidence>
<evidence type="ECO:0000250" key="2">
    <source>
        <dbReference type="UniProtKB" id="Q62638"/>
    </source>
</evidence>
<evidence type="ECO:0000250" key="3">
    <source>
        <dbReference type="UniProtKB" id="Q92896"/>
    </source>
</evidence>
<evidence type="ECO:0000255" key="4"/>
<evidence type="ECO:0000256" key="5">
    <source>
        <dbReference type="SAM" id="MobiDB-lite"/>
    </source>
</evidence>
<evidence type="ECO:0000269" key="6">
    <source>
    </source>
</evidence>
<evidence type="ECO:0000269" key="7">
    <source>
    </source>
</evidence>
<evidence type="ECO:0000269" key="8">
    <source>
    </source>
</evidence>
<gene>
    <name type="primary">GLG1</name>
    <name type="synonym">CFR</name>
</gene>
<organism>
    <name type="scientific">Gallus gallus</name>
    <name type="common">Chicken</name>
    <dbReference type="NCBI Taxonomy" id="9031"/>
    <lineage>
        <taxon>Eukaryota</taxon>
        <taxon>Metazoa</taxon>
        <taxon>Chordata</taxon>
        <taxon>Craniata</taxon>
        <taxon>Vertebrata</taxon>
        <taxon>Euteleostomi</taxon>
        <taxon>Archelosauria</taxon>
        <taxon>Archosauria</taxon>
        <taxon>Dinosauria</taxon>
        <taxon>Saurischia</taxon>
        <taxon>Theropoda</taxon>
        <taxon>Coelurosauria</taxon>
        <taxon>Aves</taxon>
        <taxon>Neognathae</taxon>
        <taxon>Galloanserae</taxon>
        <taxon>Galliformes</taxon>
        <taxon>Phasianidae</taxon>
        <taxon>Phasianinae</taxon>
        <taxon>Gallus</taxon>
    </lineage>
</organism>
<comment type="function">
    <text evidence="3 6">Binds fibroblast growth factor and E-selectin (cell-adhesion lectin on endothelial cells mediating the binding of neutrophils) (By similarity). Binds fibroblast growth factor (FGF). May be involved in intracellular FGF trafficking and the regulation of cellular responses to FGFS (PubMed:1448090).</text>
</comment>
<comment type="subcellular location">
    <subcellularLocation>
        <location evidence="8">Golgi apparatus membrane</location>
        <topology evidence="4">Single-pass type I membrane protein</topology>
    </subcellularLocation>
    <subcellularLocation>
        <location evidence="2">Golgi outpost</location>
    </subcellularLocation>
    <subcellularLocation>
        <location evidence="2">Cytoplasm</location>
        <location evidence="2">Cytoskeleton</location>
        <location evidence="2">Microtubule organizing center</location>
    </subcellularLocation>
    <text evidence="2">Golgi medial cisternae. Localizes to the postsynaptic Golgi apparatus region, also named Golgi outpost, which shapes dendrite morphology by functioning as sites of acentrosomal microtubule nucleation.</text>
</comment>
<comment type="PTM">
    <text evidence="1">Fucosylation is essential for binding to E-selectin.</text>
</comment>
<comment type="PTM">
    <text evidence="7">N-glycosylated. Contains sialic acid residues.</text>
</comment>
<keyword id="KW-0963">Cytoplasm</keyword>
<keyword id="KW-0206">Cytoskeleton</keyword>
<keyword id="KW-0325">Glycoprotein</keyword>
<keyword id="KW-0333">Golgi apparatus</keyword>
<keyword id="KW-0472">Membrane</keyword>
<keyword id="KW-1185">Reference proteome</keyword>
<keyword id="KW-0677">Repeat</keyword>
<keyword id="KW-0730">Sialic acid</keyword>
<keyword id="KW-0732">Signal</keyword>
<keyword id="KW-0812">Transmembrane</keyword>
<keyword id="KW-1133">Transmembrane helix</keyword>
<proteinExistence type="evidence at protein level"/>
<name>GSLG1_CHICK</name>
<dbReference type="EMBL" id="M95766">
    <property type="protein sequence ID" value="AAA48769.1"/>
    <property type="molecule type" value="mRNA"/>
</dbReference>
<dbReference type="EMBL" id="U48395">
    <property type="protein sequence ID" value="AAB39211.1"/>
    <property type="molecule type" value="mRNA"/>
</dbReference>
<dbReference type="PIR" id="A45031">
    <property type="entry name" value="A45031"/>
</dbReference>
<dbReference type="RefSeq" id="NP_990827.1">
    <property type="nucleotide sequence ID" value="NM_205496.2"/>
</dbReference>
<dbReference type="BioGRID" id="676739">
    <property type="interactions" value="1"/>
</dbReference>
<dbReference type="FunCoup" id="Q02391">
    <property type="interactions" value="2734"/>
</dbReference>
<dbReference type="STRING" id="9031.ENSGALP00000043789"/>
<dbReference type="GlyCosmos" id="Q02391">
    <property type="glycosylation" value="5 sites, No reported glycans"/>
</dbReference>
<dbReference type="GlyGen" id="Q02391">
    <property type="glycosylation" value="5 sites"/>
</dbReference>
<dbReference type="PaxDb" id="9031-ENSGALP00000004317"/>
<dbReference type="Ensembl" id="ENSGALT00000066690">
    <property type="protein sequence ID" value="ENSGALP00000043789"/>
    <property type="gene ID" value="ENSGALG00000039818"/>
</dbReference>
<dbReference type="Ensembl" id="ENSGALT00010056707.1">
    <property type="protein sequence ID" value="ENSGALP00010034449.1"/>
    <property type="gene ID" value="ENSGALG00010023252.1"/>
</dbReference>
<dbReference type="GeneID" id="396492"/>
<dbReference type="KEGG" id="gga:396492"/>
<dbReference type="CTD" id="2734"/>
<dbReference type="VEuPathDB" id="HostDB:geneid_396492"/>
<dbReference type="eggNOG" id="KOG3648">
    <property type="taxonomic scope" value="Eukaryota"/>
</dbReference>
<dbReference type="GeneTree" id="ENSGT00390000011262"/>
<dbReference type="InParanoid" id="Q02391"/>
<dbReference type="OMA" id="MMECLIE"/>
<dbReference type="OrthoDB" id="2015434at2759"/>
<dbReference type="PhylomeDB" id="Q02391"/>
<dbReference type="PRO" id="PR:Q02391"/>
<dbReference type="Proteomes" id="UP000000539">
    <property type="component" value="Chromosome 11"/>
</dbReference>
<dbReference type="GO" id="GO:0031012">
    <property type="term" value="C:extracellular matrix"/>
    <property type="evidence" value="ECO:0007669"/>
    <property type="project" value="Ensembl"/>
</dbReference>
<dbReference type="GO" id="GO:0000139">
    <property type="term" value="C:Golgi membrane"/>
    <property type="evidence" value="ECO:0007669"/>
    <property type="project" value="UniProtKB-SubCell"/>
</dbReference>
<dbReference type="GO" id="GO:0005815">
    <property type="term" value="C:microtubule organizing center"/>
    <property type="evidence" value="ECO:0007669"/>
    <property type="project" value="UniProtKB-SubCell"/>
</dbReference>
<dbReference type="GO" id="GO:0060349">
    <property type="term" value="P:bone morphogenesis"/>
    <property type="evidence" value="ECO:0007669"/>
    <property type="project" value="Ensembl"/>
</dbReference>
<dbReference type="GO" id="GO:0010955">
    <property type="term" value="P:negative regulation of protein processing"/>
    <property type="evidence" value="ECO:0007669"/>
    <property type="project" value="Ensembl"/>
</dbReference>
<dbReference type="GO" id="GO:0030512">
    <property type="term" value="P:negative regulation of transforming growth factor beta receptor signaling pathway"/>
    <property type="evidence" value="ECO:0007669"/>
    <property type="project" value="Ensembl"/>
</dbReference>
<dbReference type="GO" id="GO:0016485">
    <property type="term" value="P:protein processing"/>
    <property type="evidence" value="ECO:0007669"/>
    <property type="project" value="Ensembl"/>
</dbReference>
<dbReference type="GO" id="GO:0032330">
    <property type="term" value="P:regulation of chondrocyte differentiation"/>
    <property type="evidence" value="ECO:0007669"/>
    <property type="project" value="Ensembl"/>
</dbReference>
<dbReference type="GO" id="GO:0007179">
    <property type="term" value="P:transforming growth factor beta receptor signaling pathway"/>
    <property type="evidence" value="ECO:0007669"/>
    <property type="project" value="Ensembl"/>
</dbReference>
<dbReference type="InterPro" id="IPR001893">
    <property type="entry name" value="Cys-rich_GLG1_repeat"/>
</dbReference>
<dbReference type="InterPro" id="IPR017873">
    <property type="entry name" value="Cys-rich_GLG1_repeat_euk"/>
</dbReference>
<dbReference type="InterPro" id="IPR039728">
    <property type="entry name" value="GLG1"/>
</dbReference>
<dbReference type="PANTHER" id="PTHR11884:SF1">
    <property type="entry name" value="GOLGI APPARATUS PROTEIN 1"/>
    <property type="match status" value="1"/>
</dbReference>
<dbReference type="PANTHER" id="PTHR11884">
    <property type="entry name" value="SELECTIN LIGAND RELATED"/>
    <property type="match status" value="1"/>
</dbReference>
<dbReference type="Pfam" id="PF00839">
    <property type="entry name" value="Cys_rich_FGFR"/>
    <property type="match status" value="15"/>
</dbReference>
<dbReference type="PROSITE" id="PS51289">
    <property type="entry name" value="GLG1_C_RICH"/>
    <property type="match status" value="16"/>
</dbReference>
<accession>Q02391</accession>
<accession>Q91019</accession>
<reference key="1">
    <citation type="journal article" date="1992" name="Mol. Cell. Biol.">
        <title>Identification of a cysteine-rich receptor for fibroblast growth factors.</title>
        <authorList>
            <person name="Burrus L.W."/>
            <person name="Zuber M.E."/>
            <person name="Lueddecke B.A."/>
            <person name="Olwin B.B."/>
        </authorList>
    </citation>
    <scope>NUCLEOTIDE SEQUENCE [MRNA]</scope>
    <scope>FUNCTION</scope>
    <source>
        <tissue>Embryonic brain</tissue>
    </source>
</reference>
<reference key="2">
    <citation type="journal article" date="1997" name="J. Cell. Physiol.">
        <title>Cysteine-rich FGF receptor regulates intracellular FGF-1 and FGF-2 levels.</title>
        <authorList>
            <person name="Zuber M.E."/>
            <person name="Zhou Z."/>
            <person name="Burrus L.W."/>
            <person name="Olwin B.B."/>
        </authorList>
    </citation>
    <scope>NUCLEOTIDE SEQUENCE [MRNA]</scope>
    <scope>SUBCELLULAR LOCATION</scope>
    <scope>MUTAGENESIS OF 1042-CYS--ARG-1142</scope>
</reference>
<reference key="3">
    <citation type="journal article" date="1989" name="J. Biol. Chem.">
        <title>Isolation of a receptor for acidic and basic fibroblast growth factor from embryonic chick.</title>
        <authorList>
            <person name="Burrus L.W."/>
            <person name="Olwin B.B."/>
        </authorList>
    </citation>
    <scope>GLYCOSYLATION</scope>
</reference>
<protein>
    <recommendedName>
        <fullName>Golgi apparatus protein 1</fullName>
    </recommendedName>
    <alternativeName>
        <fullName>Cysteine-rich fibroblast growth factor receptor</fullName>
    </alternativeName>
</protein>
<sequence>MAPCGRVRSRCPGPALLLLLALAARPALAGPPAAALQAGPGLNAAGQPAQGAAPGAAGPRGARGGGGGSGGGWKLSEEAVCREDVVRLCSKHSWANNLAVLECLQDVREPDNEISSDCNHLLWNYKLNLTTDPKFESVAREVCKSTIAEIKECADEPVGKGFLVSCLVDHRGNITEYQCHQYITKMTAIIFSDYRLICGFMDDCKADINLLKCGSIRPGEKDAHSQGEVVACLEKGLVKEAEENDPRVQVSDQCKKAILRVAELSSDDFHLDRHLYFACRDDRERFCENTQAGEGRVYKCLFNHKFEESMSEKCRDALTTRQKLIAQDYKVSYSLAKSCKSDLKKYRCNVENLPRSREARLSYLLMCLESAVHRGRQVSSECQGEMLDYRRMLMEDFSLSPEIILSCRGEIEHHCSGLHRKGRTLHCLMKVVRGEKGNVGLNCQQALQTLIQETDPGADYRIDRALNEACESVIQTACKHIRSGDPMILSCLMEHLYTEKMVEDCEHRLLELQYFISRDWKLDVVLYRKCQGDASRLCHTHGWNETSELMPPGAVFSCLYRHAYRTEEQGRRLSRECRAEVQRILHQRAMDVKLDPALQDKCMIDLGKWCSEKTETGQELECLQDHLDDLVSDCRDIVGNLTELESEDIQIEALLMRACEPIIQTFCHEVADNQIDSGDLMECLIQNKHQKEMNEKCAIGVTHFQLVQMKDFRFSYKFKMACKEDVLKLCPNIKKKVDVVICLSTTVRNDTLQDAKEHRVSLKCRKQLRVEELEMTEDIRLEPELYEACKSDIKNYCQNVPYGNAQIIECLKEIKKQLSTRCHQKVFKLQETEMMDPELDYTLMRVCKQMIKRFCPEADSKNMLQCLKQNKNSEVMDPKCKQMITKRQITQNTDYRLNPVLRKACKADIPKFCQNILNRAKDDTELEGQVISCLKLKYADQRLSPDCEDQIRVIIQESALDYRLDPQLQMHCSEEISSLCAEEAAAQEQTGQVEECLKVNLLKIKTEMCKKEVLNMLKESKADIFVDPVLHTACALDIKHHCAAIPPGRGRQMSCLMEALEDKRVRLQPECKKRLNDRIEMWSYAAKVAPAEGFSDLAMQVMTSPSKNYILSVITVGICVLFLIGLMCGRITKRVTRELKDR</sequence>